<organismHost>
    <name type="scientific">Enterobacteriaceae</name>
    <dbReference type="NCBI Taxonomy" id="543"/>
</organismHost>
<reference key="1">
    <citation type="journal article" date="1991" name="Virology">
        <title>Nucleotide sequence of the genes encoding the major tail sheath and tail tube proteins of bacteriophage P2.</title>
        <authorList>
            <person name="Temple L.M."/>
            <person name="Forsburg S.L."/>
            <person name="Calendar R."/>
            <person name="Christie G.E."/>
        </authorList>
    </citation>
    <scope>NUCLEOTIDE SEQUENCE [GENOMIC DNA]</scope>
    <scope>PROTEIN SEQUENCE OF 2-11</scope>
</reference>
<reference key="2">
    <citation type="journal article" date="1985" name="J. Mol. Biol.">
        <title>Bacteriophage P2 late promoters. II. Comparison of the four late promoter sequences.</title>
        <authorList>
            <person name="Christie G.E."/>
            <person name="Calendar R."/>
        </authorList>
    </citation>
    <scope>NUCLEOTIDE SEQUENCE [GENOMIC DNA] OF 1-115</scope>
</reference>
<evidence type="ECO:0000250" key="1">
    <source>
        <dbReference type="UniProtKB" id="P79678"/>
    </source>
</evidence>
<evidence type="ECO:0000269" key="2">
    <source>
    </source>
</evidence>
<evidence type="ECO:0000305" key="3"/>
<protein>
    <recommendedName>
        <fullName>Tail sheath protein</fullName>
        <shortName>TSP</shortName>
    </recommendedName>
    <alternativeName>
        <fullName>Major tail sheath protein</fullName>
    </alternativeName>
    <alternativeName>
        <fullName>Protein FI</fullName>
    </alternativeName>
</protein>
<accession>P22501</accession>
<sequence length="396" mass="43144">MSDYHHGVQVLEINEGTRVISTVSTAIVGMVCTASDADAETFPLNKPVLITNVQSAISKAGKKGTLAASLQAIADQSKPVTVVMRVEDGTGDDEETKLAQTVSNIIGTTDENGQYTGLKAMLAAESVTGVKPRILGVPGLDTKEVAVALASVCQKLRAFGYISAWGCKTISEVKAYRQNFSQRELMVIWPDFLAWDTVTSTTATAYATARALGLRAKIDQEQGWHKTLSNVGVNGVTGISASVFWDLQESGTDADLLNESGVTTLIRRDGFRFWGNRTCSDDPLFLFENYTRTAQVVADTMAEAHMWAVDKPITATLIRDIVDGINAKFRELKTNGYIVDATCWFSEESNDAETLKAGKLYIDYDYTPVPPLENLTLRQRITDKYLANLVTSVNSN</sequence>
<organism>
    <name type="scientific">Escherichia phage P2</name>
    <name type="common">Bacteriophage P2</name>
    <dbReference type="NCBI Taxonomy" id="2905681"/>
    <lineage>
        <taxon>Viruses</taxon>
        <taxon>Duplodnaviria</taxon>
        <taxon>Heunggongvirae</taxon>
        <taxon>Uroviricota</taxon>
        <taxon>Caudoviricetes</taxon>
        <taxon>Peduoviridae</taxon>
        <taxon>Peduovirus</taxon>
        <taxon>Peduovirus P2</taxon>
    </lineage>
</organism>
<proteinExistence type="evidence at protein level"/>
<dbReference type="EMBL" id="AF063097">
    <property type="protein sequence ID" value="AAD03289.1"/>
    <property type="molecule type" value="Genomic_DNA"/>
</dbReference>
<dbReference type="PIR" id="S26391">
    <property type="entry name" value="S26391"/>
</dbReference>
<dbReference type="RefSeq" id="NP_046778.1">
    <property type="nucleotide sequence ID" value="NC_001895.1"/>
</dbReference>
<dbReference type="SMR" id="P22501"/>
<dbReference type="GeneID" id="77440813"/>
<dbReference type="KEGG" id="vg:77440813"/>
<dbReference type="Proteomes" id="UP000009092">
    <property type="component" value="Genome"/>
</dbReference>
<dbReference type="GO" id="GO:0030430">
    <property type="term" value="C:host cell cytoplasm"/>
    <property type="evidence" value="ECO:0007669"/>
    <property type="project" value="UniProtKB-SubCell"/>
</dbReference>
<dbReference type="GO" id="GO:0098027">
    <property type="term" value="C:virus tail, sheath"/>
    <property type="evidence" value="ECO:0007669"/>
    <property type="project" value="UniProtKB-KW"/>
</dbReference>
<dbReference type="GO" id="GO:0099000">
    <property type="term" value="P:symbiont genome ejection through host cell envelope, contractile tail mechanism"/>
    <property type="evidence" value="ECO:0007669"/>
    <property type="project" value="UniProtKB-KW"/>
</dbReference>
<dbReference type="InterPro" id="IPR054564">
    <property type="entry name" value="Gp18_domIII_N"/>
</dbReference>
<dbReference type="InterPro" id="IPR035089">
    <property type="entry name" value="Phage_sheath_subtilisin"/>
</dbReference>
<dbReference type="InterPro" id="IPR052042">
    <property type="entry name" value="Phage_Tail_Sheath_Structural"/>
</dbReference>
<dbReference type="InterPro" id="IPR020287">
    <property type="entry name" value="Tail_sheath_C"/>
</dbReference>
<dbReference type="PANTHER" id="PTHR35861">
    <property type="match status" value="1"/>
</dbReference>
<dbReference type="PANTHER" id="PTHR35861:SF1">
    <property type="entry name" value="PHAGE TAIL SHEATH PROTEIN"/>
    <property type="match status" value="1"/>
</dbReference>
<dbReference type="Pfam" id="PF22671">
    <property type="entry name" value="Gp18_domIII_N"/>
    <property type="match status" value="1"/>
</dbReference>
<dbReference type="Pfam" id="PF04984">
    <property type="entry name" value="Phage_sheath_1"/>
    <property type="match status" value="1"/>
</dbReference>
<dbReference type="Pfam" id="PF17482">
    <property type="entry name" value="Phage_sheath_1C"/>
    <property type="match status" value="1"/>
</dbReference>
<gene>
    <name type="primary">FI</name>
</gene>
<name>TSP_BPP2</name>
<feature type="initiator methionine" description="Removed; by host" evidence="2">
    <location>
        <position position="1"/>
    </location>
</feature>
<feature type="chain" id="PRO_0000165250" description="Tail sheath protein">
    <location>
        <begin position="2"/>
        <end position="396"/>
    </location>
</feature>
<keyword id="KW-0903">Direct protein sequencing</keyword>
<keyword id="KW-1035">Host cytoplasm</keyword>
<keyword id="KW-0426">Late protein</keyword>
<keyword id="KW-1185">Reference proteome</keyword>
<keyword id="KW-1242">Viral contractile tail ejection system</keyword>
<keyword id="KW-1171">Viral genome ejection through host cell envelope</keyword>
<keyword id="KW-1162">Viral penetration into host cytoplasm</keyword>
<keyword id="KW-1227">Viral tail protein</keyword>
<keyword id="KW-1229">Viral tail sheath protein</keyword>
<keyword id="KW-0946">Virion</keyword>
<keyword id="KW-1160">Virus entry into host cell</keyword>
<comment type="function">
    <text evidence="1">Polymerizes as an extended helical structure around the baseplate-tail tube complex. During ejection, the sheath shifts to a contracted form, thereby making the inner tail tube protrude through the host cell envelope.</text>
</comment>
<comment type="subunit">
    <text evidence="1">Homomultimer.</text>
</comment>
<comment type="subcellular location">
    <subcellularLocation>
        <location evidence="1">Virion</location>
    </subcellularLocation>
    <subcellularLocation>
        <location evidence="1">Host cytoplasm</location>
    </subcellularLocation>
    <text evidence="1">Tail.</text>
</comment>
<comment type="similarity">
    <text evidence="3">Belongs to the myoviridae tail sheath protein family.</text>
</comment>